<comment type="catalytic activity">
    <reaction evidence="1">
        <text>L-aspartate + NH4(+) + ATP = L-asparagine + AMP + diphosphate + H(+)</text>
        <dbReference type="Rhea" id="RHEA:11372"/>
        <dbReference type="ChEBI" id="CHEBI:15378"/>
        <dbReference type="ChEBI" id="CHEBI:28938"/>
        <dbReference type="ChEBI" id="CHEBI:29991"/>
        <dbReference type="ChEBI" id="CHEBI:30616"/>
        <dbReference type="ChEBI" id="CHEBI:33019"/>
        <dbReference type="ChEBI" id="CHEBI:58048"/>
        <dbReference type="ChEBI" id="CHEBI:456215"/>
        <dbReference type="EC" id="6.3.1.1"/>
    </reaction>
</comment>
<comment type="pathway">
    <text evidence="1">Amino-acid biosynthesis; L-asparagine biosynthesis; L-asparagine from L-aspartate (ammonia route): step 1/1.</text>
</comment>
<comment type="subcellular location">
    <subcellularLocation>
        <location evidence="1">Cytoplasm</location>
    </subcellularLocation>
</comment>
<comment type="similarity">
    <text evidence="1">Belongs to the class-II aminoacyl-tRNA synthetase family. AsnA subfamily.</text>
</comment>
<feature type="chain" id="PRO_1000017957" description="Aspartate--ammonia ligase">
    <location>
        <begin position="1"/>
        <end position="330"/>
    </location>
</feature>
<name>ASNA_SALCH</name>
<keyword id="KW-0028">Amino-acid biosynthesis</keyword>
<keyword id="KW-0061">Asparagine biosynthesis</keyword>
<keyword id="KW-0067">ATP-binding</keyword>
<keyword id="KW-0963">Cytoplasm</keyword>
<keyword id="KW-0436">Ligase</keyword>
<keyword id="KW-0547">Nucleotide-binding</keyword>
<sequence>MKTAYIAKQRQISFVKSHFSRQLEERLGLIEVQAPILSRVGDGTQDNLSGCEKAVQVKVKALPDAQFEVVHSLAKWKRQTLGQHDFSAGEGLYTHMKALRPDEDRLSPLHSVYVDQWDWERVMGDGERQFSTLKSTVEAIWAGIKATEAEVHKQFGLAPFLPEQIQFVHSQELLSRYPDLDAKGRERAIAKELGAVFLVGIGGKLSDGHRHDVRAPDYDDWSSASELGYAGLNGDILVWNPVLEDAFELSSMGIRVDADTLMRQLALTGDEDRLQLEWHQALLRGEMPQTIGGGIGQSRLTMLLLQLPHIGQVQCGVWPAQVRESIPAIL</sequence>
<protein>
    <recommendedName>
        <fullName evidence="1">Aspartate--ammonia ligase</fullName>
        <ecNumber evidence="1">6.3.1.1</ecNumber>
    </recommendedName>
    <alternativeName>
        <fullName evidence="1">Asparagine synthetase A</fullName>
    </alternativeName>
</protein>
<organism>
    <name type="scientific">Salmonella choleraesuis (strain SC-B67)</name>
    <dbReference type="NCBI Taxonomy" id="321314"/>
    <lineage>
        <taxon>Bacteria</taxon>
        <taxon>Pseudomonadati</taxon>
        <taxon>Pseudomonadota</taxon>
        <taxon>Gammaproteobacteria</taxon>
        <taxon>Enterobacterales</taxon>
        <taxon>Enterobacteriaceae</taxon>
        <taxon>Salmonella</taxon>
    </lineage>
</organism>
<reference key="1">
    <citation type="journal article" date="2005" name="Nucleic Acids Res.">
        <title>The genome sequence of Salmonella enterica serovar Choleraesuis, a highly invasive and resistant zoonotic pathogen.</title>
        <authorList>
            <person name="Chiu C.-H."/>
            <person name="Tang P."/>
            <person name="Chu C."/>
            <person name="Hu S."/>
            <person name="Bao Q."/>
            <person name="Yu J."/>
            <person name="Chou Y.-Y."/>
            <person name="Wang H.-S."/>
            <person name="Lee Y.-S."/>
        </authorList>
    </citation>
    <scope>NUCLEOTIDE SEQUENCE [LARGE SCALE GENOMIC DNA]</scope>
    <source>
        <strain>SC-B67</strain>
    </source>
</reference>
<dbReference type="EC" id="6.3.1.1" evidence="1"/>
<dbReference type="EMBL" id="AE017220">
    <property type="protein sequence ID" value="AAX67696.1"/>
    <property type="molecule type" value="Genomic_DNA"/>
</dbReference>
<dbReference type="RefSeq" id="WP_000845123.1">
    <property type="nucleotide sequence ID" value="NC_006905.1"/>
</dbReference>
<dbReference type="SMR" id="Q57HW6"/>
<dbReference type="KEGG" id="sec:SCH_3790"/>
<dbReference type="HOGENOM" id="CLU_071543_0_0_6"/>
<dbReference type="UniPathway" id="UPA00134">
    <property type="reaction ID" value="UER00194"/>
</dbReference>
<dbReference type="Proteomes" id="UP000000538">
    <property type="component" value="Chromosome"/>
</dbReference>
<dbReference type="GO" id="GO:0005829">
    <property type="term" value="C:cytosol"/>
    <property type="evidence" value="ECO:0007669"/>
    <property type="project" value="TreeGrafter"/>
</dbReference>
<dbReference type="GO" id="GO:0004071">
    <property type="term" value="F:aspartate-ammonia ligase activity"/>
    <property type="evidence" value="ECO:0007669"/>
    <property type="project" value="UniProtKB-UniRule"/>
</dbReference>
<dbReference type="GO" id="GO:0005524">
    <property type="term" value="F:ATP binding"/>
    <property type="evidence" value="ECO:0007669"/>
    <property type="project" value="UniProtKB-UniRule"/>
</dbReference>
<dbReference type="GO" id="GO:0070981">
    <property type="term" value="P:L-asparagine biosynthetic process"/>
    <property type="evidence" value="ECO:0007669"/>
    <property type="project" value="UniProtKB-UniRule"/>
</dbReference>
<dbReference type="CDD" id="cd00645">
    <property type="entry name" value="AsnA"/>
    <property type="match status" value="1"/>
</dbReference>
<dbReference type="FunFam" id="3.30.930.10:FF:000025">
    <property type="entry name" value="Aspartate--ammonia ligase"/>
    <property type="match status" value="1"/>
</dbReference>
<dbReference type="Gene3D" id="3.30.930.10">
    <property type="entry name" value="Bira Bifunctional Protein, Domain 2"/>
    <property type="match status" value="1"/>
</dbReference>
<dbReference type="HAMAP" id="MF_00555">
    <property type="entry name" value="AsnA"/>
    <property type="match status" value="1"/>
</dbReference>
<dbReference type="InterPro" id="IPR006195">
    <property type="entry name" value="aa-tRNA-synth_II"/>
</dbReference>
<dbReference type="InterPro" id="IPR045864">
    <property type="entry name" value="aa-tRNA-synth_II/BPL/LPL"/>
</dbReference>
<dbReference type="InterPro" id="IPR004618">
    <property type="entry name" value="AsnA"/>
</dbReference>
<dbReference type="NCBIfam" id="TIGR00669">
    <property type="entry name" value="asnA"/>
    <property type="match status" value="1"/>
</dbReference>
<dbReference type="PANTHER" id="PTHR30073">
    <property type="entry name" value="ASPARTATE--AMMONIA LIGASE"/>
    <property type="match status" value="1"/>
</dbReference>
<dbReference type="PANTHER" id="PTHR30073:SF5">
    <property type="entry name" value="ASPARTATE--AMMONIA LIGASE"/>
    <property type="match status" value="1"/>
</dbReference>
<dbReference type="Pfam" id="PF03590">
    <property type="entry name" value="AsnA"/>
    <property type="match status" value="1"/>
</dbReference>
<dbReference type="PIRSF" id="PIRSF001555">
    <property type="entry name" value="Asp_ammon_ligase"/>
    <property type="match status" value="1"/>
</dbReference>
<dbReference type="SUPFAM" id="SSF55681">
    <property type="entry name" value="Class II aaRS and biotin synthetases"/>
    <property type="match status" value="1"/>
</dbReference>
<dbReference type="PROSITE" id="PS50862">
    <property type="entry name" value="AA_TRNA_LIGASE_II"/>
    <property type="match status" value="1"/>
</dbReference>
<proteinExistence type="inferred from homology"/>
<evidence type="ECO:0000255" key="1">
    <source>
        <dbReference type="HAMAP-Rule" id="MF_00555"/>
    </source>
</evidence>
<accession>Q57HW6</accession>
<gene>
    <name evidence="1" type="primary">asnA</name>
    <name type="ordered locus">SCH_3790</name>
</gene>